<name>EFG_STAA2</name>
<evidence type="ECO:0000255" key="1">
    <source>
        <dbReference type="HAMAP-Rule" id="MF_00054"/>
    </source>
</evidence>
<keyword id="KW-0963">Cytoplasm</keyword>
<keyword id="KW-0251">Elongation factor</keyword>
<keyword id="KW-0342">GTP-binding</keyword>
<keyword id="KW-0547">Nucleotide-binding</keyword>
<keyword id="KW-0648">Protein biosynthesis</keyword>
<sequence length="693" mass="76612">MAREFSLEKTRNIGIMAHIDAGKTTTTERILYYTGRIHKIGETHEGASQMDWMEQEQDRGITITSAATTAAWEGHRVNIIDTPGHVDFTVEVERSLRVLDGAVTVLDAQSGVEPQTETVWRQATTYGVPRIVFVNKMDKLGANFEYSVSTLHDRLQANAAPIQLPIGAEDEFEAIIDLVEMKCFKYTNDLGTEIEEIEIPEDHLDRAEEARASLIEAVAETSDELMEKYLGDEEISVSELKEAIRQATTNVEFYPVLCGTAFKNKGVQLMLDAVIDYLPSPLDVKPIIGHRASNPEEEVIAKADDSAEFAALAFKVMTDPYVGKLTFFRVYSGTMTSGSYVKNSTKGKRERVGRLLQMHANSRQEIDTVYSGDIAAAVGLKDTGTGDTLCGEKNDIILESMEFPEPVIHLSVEPKSKADQDKMTQALVKLQEEDPTFHAHTDEETGQVIIGGMGELHLDILVDRMKKEFNVECNVGAPMVSYRETFKSSAQVQGKFSRQSGGRGQYGDVHIEFTPNETGAGFEFENAIVGGVVPREYIPSVEAGLKDAMENGVLAGYPLIDVKAKLYDGSYHDVDSSEMAFKIAASLALKEAAKKCDPVILEPMMKVTIEMPEEYMGDIMGDVTSRRGRVDGMEPRGNAQVVNAYVPLSEMFGYATSLRSNTQGRGTYTMYFDHYAEVPKSIAEDIIKKNKGE</sequence>
<proteinExistence type="inferred from homology"/>
<reference key="1">
    <citation type="submission" date="2007-06" db="EMBL/GenBank/DDBJ databases">
        <title>Complete sequence of chromosome of Staphylococcus aureus subsp. aureus JH1.</title>
        <authorList>
            <consortium name="US DOE Joint Genome Institute"/>
            <person name="Copeland A."/>
            <person name="Lucas S."/>
            <person name="Lapidus A."/>
            <person name="Barry K."/>
            <person name="Detter J.C."/>
            <person name="Glavina del Rio T."/>
            <person name="Hammon N."/>
            <person name="Israni S."/>
            <person name="Dalin E."/>
            <person name="Tice H."/>
            <person name="Pitluck S."/>
            <person name="Chain P."/>
            <person name="Malfatti S."/>
            <person name="Shin M."/>
            <person name="Vergez L."/>
            <person name="Schmutz J."/>
            <person name="Larimer F."/>
            <person name="Land M."/>
            <person name="Hauser L."/>
            <person name="Kyrpides N."/>
            <person name="Ivanova N."/>
            <person name="Tomasz A."/>
            <person name="Richardson P."/>
        </authorList>
    </citation>
    <scope>NUCLEOTIDE SEQUENCE [LARGE SCALE GENOMIC DNA]</scope>
    <source>
        <strain>JH1</strain>
    </source>
</reference>
<feature type="chain" id="PRO_1000074972" description="Elongation factor G">
    <location>
        <begin position="1"/>
        <end position="693"/>
    </location>
</feature>
<feature type="domain" description="tr-type G">
    <location>
        <begin position="8"/>
        <end position="282"/>
    </location>
</feature>
<feature type="binding site" evidence="1">
    <location>
        <begin position="17"/>
        <end position="24"/>
    </location>
    <ligand>
        <name>GTP</name>
        <dbReference type="ChEBI" id="CHEBI:37565"/>
    </ligand>
</feature>
<feature type="binding site" evidence="1">
    <location>
        <begin position="81"/>
        <end position="85"/>
    </location>
    <ligand>
        <name>GTP</name>
        <dbReference type="ChEBI" id="CHEBI:37565"/>
    </ligand>
</feature>
<feature type="binding site" evidence="1">
    <location>
        <begin position="135"/>
        <end position="138"/>
    </location>
    <ligand>
        <name>GTP</name>
        <dbReference type="ChEBI" id="CHEBI:37565"/>
    </ligand>
</feature>
<accession>A6TZ24</accession>
<protein>
    <recommendedName>
        <fullName evidence="1">Elongation factor G</fullName>
        <shortName evidence="1">EF-G</shortName>
    </recommendedName>
</protein>
<comment type="function">
    <text evidence="1">Catalyzes the GTP-dependent ribosomal translocation step during translation elongation. During this step, the ribosome changes from the pre-translocational (PRE) to the post-translocational (POST) state as the newly formed A-site-bound peptidyl-tRNA and P-site-bound deacylated tRNA move to the P and E sites, respectively. Catalyzes the coordinated movement of the two tRNA molecules, the mRNA and conformational changes in the ribosome.</text>
</comment>
<comment type="subcellular location">
    <subcellularLocation>
        <location evidence="1">Cytoplasm</location>
    </subcellularLocation>
</comment>
<comment type="similarity">
    <text evidence="1">Belongs to the TRAFAC class translation factor GTPase superfamily. Classic translation factor GTPase family. EF-G/EF-2 subfamily.</text>
</comment>
<organism>
    <name type="scientific">Staphylococcus aureus (strain JH1)</name>
    <dbReference type="NCBI Taxonomy" id="359787"/>
    <lineage>
        <taxon>Bacteria</taxon>
        <taxon>Bacillati</taxon>
        <taxon>Bacillota</taxon>
        <taxon>Bacilli</taxon>
        <taxon>Bacillales</taxon>
        <taxon>Staphylococcaceae</taxon>
        <taxon>Staphylococcus</taxon>
    </lineage>
</organism>
<dbReference type="EMBL" id="CP000736">
    <property type="protein sequence ID" value="ABR51442.1"/>
    <property type="molecule type" value="Genomic_DNA"/>
</dbReference>
<dbReference type="SMR" id="A6TZ24"/>
<dbReference type="KEGG" id="sah:SaurJH1_0584"/>
<dbReference type="HOGENOM" id="CLU_002794_4_1_9"/>
<dbReference type="GO" id="GO:0005737">
    <property type="term" value="C:cytoplasm"/>
    <property type="evidence" value="ECO:0007669"/>
    <property type="project" value="UniProtKB-SubCell"/>
</dbReference>
<dbReference type="GO" id="GO:0005525">
    <property type="term" value="F:GTP binding"/>
    <property type="evidence" value="ECO:0007669"/>
    <property type="project" value="UniProtKB-UniRule"/>
</dbReference>
<dbReference type="GO" id="GO:0003924">
    <property type="term" value="F:GTPase activity"/>
    <property type="evidence" value="ECO:0007669"/>
    <property type="project" value="InterPro"/>
</dbReference>
<dbReference type="GO" id="GO:0003746">
    <property type="term" value="F:translation elongation factor activity"/>
    <property type="evidence" value="ECO:0007669"/>
    <property type="project" value="UniProtKB-UniRule"/>
</dbReference>
<dbReference type="GO" id="GO:0032790">
    <property type="term" value="P:ribosome disassembly"/>
    <property type="evidence" value="ECO:0007669"/>
    <property type="project" value="TreeGrafter"/>
</dbReference>
<dbReference type="CDD" id="cd01886">
    <property type="entry name" value="EF-G"/>
    <property type="match status" value="1"/>
</dbReference>
<dbReference type="CDD" id="cd16262">
    <property type="entry name" value="EFG_III"/>
    <property type="match status" value="1"/>
</dbReference>
<dbReference type="CDD" id="cd01434">
    <property type="entry name" value="EFG_mtEFG1_IV"/>
    <property type="match status" value="1"/>
</dbReference>
<dbReference type="CDD" id="cd03713">
    <property type="entry name" value="EFG_mtEFG_C"/>
    <property type="match status" value="1"/>
</dbReference>
<dbReference type="CDD" id="cd04088">
    <property type="entry name" value="EFG_mtEFG_II"/>
    <property type="match status" value="1"/>
</dbReference>
<dbReference type="FunFam" id="2.40.30.10:FF:000006">
    <property type="entry name" value="Elongation factor G"/>
    <property type="match status" value="1"/>
</dbReference>
<dbReference type="FunFam" id="3.30.230.10:FF:000003">
    <property type="entry name" value="Elongation factor G"/>
    <property type="match status" value="1"/>
</dbReference>
<dbReference type="FunFam" id="3.30.70.240:FF:000001">
    <property type="entry name" value="Elongation factor G"/>
    <property type="match status" value="1"/>
</dbReference>
<dbReference type="FunFam" id="3.30.70.870:FF:000001">
    <property type="entry name" value="Elongation factor G"/>
    <property type="match status" value="1"/>
</dbReference>
<dbReference type="FunFam" id="3.40.50.300:FF:000029">
    <property type="entry name" value="Elongation factor G"/>
    <property type="match status" value="1"/>
</dbReference>
<dbReference type="Gene3D" id="3.30.230.10">
    <property type="match status" value="1"/>
</dbReference>
<dbReference type="Gene3D" id="3.30.70.240">
    <property type="match status" value="1"/>
</dbReference>
<dbReference type="Gene3D" id="3.30.70.870">
    <property type="entry name" value="Elongation Factor G (Translational Gtpase), domain 3"/>
    <property type="match status" value="1"/>
</dbReference>
<dbReference type="Gene3D" id="3.40.50.300">
    <property type="entry name" value="P-loop containing nucleotide triphosphate hydrolases"/>
    <property type="match status" value="1"/>
</dbReference>
<dbReference type="Gene3D" id="2.40.30.10">
    <property type="entry name" value="Translation factors"/>
    <property type="match status" value="1"/>
</dbReference>
<dbReference type="HAMAP" id="MF_00054_B">
    <property type="entry name" value="EF_G_EF_2_B"/>
    <property type="match status" value="1"/>
</dbReference>
<dbReference type="InterPro" id="IPR041095">
    <property type="entry name" value="EFG_II"/>
</dbReference>
<dbReference type="InterPro" id="IPR009022">
    <property type="entry name" value="EFG_III"/>
</dbReference>
<dbReference type="InterPro" id="IPR035647">
    <property type="entry name" value="EFG_III/V"/>
</dbReference>
<dbReference type="InterPro" id="IPR047872">
    <property type="entry name" value="EFG_IV"/>
</dbReference>
<dbReference type="InterPro" id="IPR035649">
    <property type="entry name" value="EFG_V"/>
</dbReference>
<dbReference type="InterPro" id="IPR000640">
    <property type="entry name" value="EFG_V-like"/>
</dbReference>
<dbReference type="InterPro" id="IPR004161">
    <property type="entry name" value="EFTu-like_2"/>
</dbReference>
<dbReference type="InterPro" id="IPR031157">
    <property type="entry name" value="G_TR_CS"/>
</dbReference>
<dbReference type="InterPro" id="IPR027417">
    <property type="entry name" value="P-loop_NTPase"/>
</dbReference>
<dbReference type="InterPro" id="IPR020568">
    <property type="entry name" value="Ribosomal_Su5_D2-typ_SF"/>
</dbReference>
<dbReference type="InterPro" id="IPR014721">
    <property type="entry name" value="Ribsml_uS5_D2-typ_fold_subgr"/>
</dbReference>
<dbReference type="InterPro" id="IPR005225">
    <property type="entry name" value="Small_GTP-bd"/>
</dbReference>
<dbReference type="InterPro" id="IPR000795">
    <property type="entry name" value="T_Tr_GTP-bd_dom"/>
</dbReference>
<dbReference type="InterPro" id="IPR009000">
    <property type="entry name" value="Transl_B-barrel_sf"/>
</dbReference>
<dbReference type="InterPro" id="IPR004540">
    <property type="entry name" value="Transl_elong_EFG/EF2"/>
</dbReference>
<dbReference type="InterPro" id="IPR005517">
    <property type="entry name" value="Transl_elong_EFG/EF2_IV"/>
</dbReference>
<dbReference type="NCBIfam" id="TIGR00484">
    <property type="entry name" value="EF-G"/>
    <property type="match status" value="1"/>
</dbReference>
<dbReference type="NCBIfam" id="NF009379">
    <property type="entry name" value="PRK12740.1-3"/>
    <property type="match status" value="1"/>
</dbReference>
<dbReference type="NCBIfam" id="NF009381">
    <property type="entry name" value="PRK12740.1-5"/>
    <property type="match status" value="1"/>
</dbReference>
<dbReference type="NCBIfam" id="TIGR00231">
    <property type="entry name" value="small_GTP"/>
    <property type="match status" value="1"/>
</dbReference>
<dbReference type="PANTHER" id="PTHR43261:SF1">
    <property type="entry name" value="RIBOSOME-RELEASING FACTOR 2, MITOCHONDRIAL"/>
    <property type="match status" value="1"/>
</dbReference>
<dbReference type="PANTHER" id="PTHR43261">
    <property type="entry name" value="TRANSLATION ELONGATION FACTOR G-RELATED"/>
    <property type="match status" value="1"/>
</dbReference>
<dbReference type="Pfam" id="PF00679">
    <property type="entry name" value="EFG_C"/>
    <property type="match status" value="1"/>
</dbReference>
<dbReference type="Pfam" id="PF14492">
    <property type="entry name" value="EFG_III"/>
    <property type="match status" value="1"/>
</dbReference>
<dbReference type="Pfam" id="PF03764">
    <property type="entry name" value="EFG_IV"/>
    <property type="match status" value="1"/>
</dbReference>
<dbReference type="Pfam" id="PF00009">
    <property type="entry name" value="GTP_EFTU"/>
    <property type="match status" value="1"/>
</dbReference>
<dbReference type="Pfam" id="PF03144">
    <property type="entry name" value="GTP_EFTU_D2"/>
    <property type="match status" value="1"/>
</dbReference>
<dbReference type="PRINTS" id="PR00315">
    <property type="entry name" value="ELONGATNFCT"/>
</dbReference>
<dbReference type="SMART" id="SM00838">
    <property type="entry name" value="EFG_C"/>
    <property type="match status" value="1"/>
</dbReference>
<dbReference type="SMART" id="SM00889">
    <property type="entry name" value="EFG_IV"/>
    <property type="match status" value="1"/>
</dbReference>
<dbReference type="SUPFAM" id="SSF54980">
    <property type="entry name" value="EF-G C-terminal domain-like"/>
    <property type="match status" value="2"/>
</dbReference>
<dbReference type="SUPFAM" id="SSF52540">
    <property type="entry name" value="P-loop containing nucleoside triphosphate hydrolases"/>
    <property type="match status" value="1"/>
</dbReference>
<dbReference type="SUPFAM" id="SSF54211">
    <property type="entry name" value="Ribosomal protein S5 domain 2-like"/>
    <property type="match status" value="1"/>
</dbReference>
<dbReference type="SUPFAM" id="SSF50447">
    <property type="entry name" value="Translation proteins"/>
    <property type="match status" value="1"/>
</dbReference>
<dbReference type="PROSITE" id="PS00301">
    <property type="entry name" value="G_TR_1"/>
    <property type="match status" value="1"/>
</dbReference>
<dbReference type="PROSITE" id="PS51722">
    <property type="entry name" value="G_TR_2"/>
    <property type="match status" value="1"/>
</dbReference>
<gene>
    <name evidence="1" type="primary">fusA</name>
    <name type="ordered locus">SaurJH1_0584</name>
</gene>